<name>GPDA_CLOBA</name>
<accession>B2V3Z2</accession>
<organism>
    <name type="scientific">Clostridium botulinum (strain Alaska E43 / Type E3)</name>
    <dbReference type="NCBI Taxonomy" id="508767"/>
    <lineage>
        <taxon>Bacteria</taxon>
        <taxon>Bacillati</taxon>
        <taxon>Bacillota</taxon>
        <taxon>Clostridia</taxon>
        <taxon>Eubacteriales</taxon>
        <taxon>Clostridiaceae</taxon>
        <taxon>Clostridium</taxon>
    </lineage>
</organism>
<feature type="chain" id="PRO_1000123133" description="Glycerol-3-phosphate dehydrogenase [NAD(P)+]">
    <location>
        <begin position="1"/>
        <end position="330"/>
    </location>
</feature>
<feature type="active site" description="Proton acceptor" evidence="1">
    <location>
        <position position="188"/>
    </location>
</feature>
<feature type="binding site" evidence="1">
    <location>
        <position position="11"/>
    </location>
    <ligand>
        <name>NADPH</name>
        <dbReference type="ChEBI" id="CHEBI:57783"/>
    </ligand>
</feature>
<feature type="binding site" evidence="1">
    <location>
        <position position="12"/>
    </location>
    <ligand>
        <name>NADPH</name>
        <dbReference type="ChEBI" id="CHEBI:57783"/>
    </ligand>
</feature>
<feature type="binding site" evidence="1">
    <location>
        <position position="32"/>
    </location>
    <ligand>
        <name>NADPH</name>
        <dbReference type="ChEBI" id="CHEBI:57783"/>
    </ligand>
</feature>
<feature type="binding site" evidence="1">
    <location>
        <position position="106"/>
    </location>
    <ligand>
        <name>NADPH</name>
        <dbReference type="ChEBI" id="CHEBI:57783"/>
    </ligand>
</feature>
<feature type="binding site" evidence="1">
    <location>
        <position position="106"/>
    </location>
    <ligand>
        <name>sn-glycerol 3-phosphate</name>
        <dbReference type="ChEBI" id="CHEBI:57597"/>
    </ligand>
</feature>
<feature type="binding site" evidence="1">
    <location>
        <position position="133"/>
    </location>
    <ligand>
        <name>sn-glycerol 3-phosphate</name>
        <dbReference type="ChEBI" id="CHEBI:57597"/>
    </ligand>
</feature>
<feature type="binding site" evidence="1">
    <location>
        <position position="135"/>
    </location>
    <ligand>
        <name>sn-glycerol 3-phosphate</name>
        <dbReference type="ChEBI" id="CHEBI:57597"/>
    </ligand>
</feature>
<feature type="binding site" evidence="1">
    <location>
        <position position="137"/>
    </location>
    <ligand>
        <name>NADPH</name>
        <dbReference type="ChEBI" id="CHEBI:57783"/>
    </ligand>
</feature>
<feature type="binding site" evidence="1">
    <location>
        <position position="188"/>
    </location>
    <ligand>
        <name>sn-glycerol 3-phosphate</name>
        <dbReference type="ChEBI" id="CHEBI:57597"/>
    </ligand>
</feature>
<feature type="binding site" evidence="1">
    <location>
        <position position="241"/>
    </location>
    <ligand>
        <name>sn-glycerol 3-phosphate</name>
        <dbReference type="ChEBI" id="CHEBI:57597"/>
    </ligand>
</feature>
<feature type="binding site" evidence="1">
    <location>
        <position position="251"/>
    </location>
    <ligand>
        <name>sn-glycerol 3-phosphate</name>
        <dbReference type="ChEBI" id="CHEBI:57597"/>
    </ligand>
</feature>
<feature type="binding site" evidence="1">
    <location>
        <position position="252"/>
    </location>
    <ligand>
        <name>NADPH</name>
        <dbReference type="ChEBI" id="CHEBI:57783"/>
    </ligand>
</feature>
<feature type="binding site" evidence="1">
    <location>
        <position position="252"/>
    </location>
    <ligand>
        <name>sn-glycerol 3-phosphate</name>
        <dbReference type="ChEBI" id="CHEBI:57597"/>
    </ligand>
</feature>
<feature type="binding site" evidence="1">
    <location>
        <position position="253"/>
    </location>
    <ligand>
        <name>sn-glycerol 3-phosphate</name>
        <dbReference type="ChEBI" id="CHEBI:57597"/>
    </ligand>
</feature>
<feature type="binding site" evidence="1">
    <location>
        <position position="276"/>
    </location>
    <ligand>
        <name>NADPH</name>
        <dbReference type="ChEBI" id="CHEBI:57783"/>
    </ligand>
</feature>
<feature type="binding site" evidence="1">
    <location>
        <position position="278"/>
    </location>
    <ligand>
        <name>NADPH</name>
        <dbReference type="ChEBI" id="CHEBI:57783"/>
    </ligand>
</feature>
<keyword id="KW-0963">Cytoplasm</keyword>
<keyword id="KW-0444">Lipid biosynthesis</keyword>
<keyword id="KW-0443">Lipid metabolism</keyword>
<keyword id="KW-0520">NAD</keyword>
<keyword id="KW-0521">NADP</keyword>
<keyword id="KW-0547">Nucleotide-binding</keyword>
<keyword id="KW-0560">Oxidoreductase</keyword>
<keyword id="KW-0594">Phospholipid biosynthesis</keyword>
<keyword id="KW-1208">Phospholipid metabolism</keyword>
<reference key="1">
    <citation type="submission" date="2008-05" db="EMBL/GenBank/DDBJ databases">
        <title>Complete genome sequence of Clostridium botulinum E3 str. Alaska E43.</title>
        <authorList>
            <person name="Brinkac L.M."/>
            <person name="Brown J.L."/>
            <person name="Bruce D."/>
            <person name="Detter C."/>
            <person name="Munk C."/>
            <person name="Smith L.A."/>
            <person name="Smith T.J."/>
            <person name="Sutton G."/>
            <person name="Brettin T.S."/>
        </authorList>
    </citation>
    <scope>NUCLEOTIDE SEQUENCE [LARGE SCALE GENOMIC DNA]</scope>
    <source>
        <strain>Alaska E43 / Type E3</strain>
    </source>
</reference>
<dbReference type="EC" id="1.1.1.94" evidence="1"/>
<dbReference type="EMBL" id="CP001078">
    <property type="protein sequence ID" value="ACD51928.1"/>
    <property type="molecule type" value="Genomic_DNA"/>
</dbReference>
<dbReference type="RefSeq" id="WP_003369143.1">
    <property type="nucleotide sequence ID" value="NC_010723.1"/>
</dbReference>
<dbReference type="SMR" id="B2V3Z2"/>
<dbReference type="KEGG" id="cbt:CLH_1155"/>
<dbReference type="HOGENOM" id="CLU_033449_0_2_9"/>
<dbReference type="UniPathway" id="UPA00940"/>
<dbReference type="GO" id="GO:0005829">
    <property type="term" value="C:cytosol"/>
    <property type="evidence" value="ECO:0007669"/>
    <property type="project" value="TreeGrafter"/>
</dbReference>
<dbReference type="GO" id="GO:0047952">
    <property type="term" value="F:glycerol-3-phosphate dehydrogenase [NAD(P)+] activity"/>
    <property type="evidence" value="ECO:0007669"/>
    <property type="project" value="UniProtKB-UniRule"/>
</dbReference>
<dbReference type="GO" id="GO:0051287">
    <property type="term" value="F:NAD binding"/>
    <property type="evidence" value="ECO:0007669"/>
    <property type="project" value="InterPro"/>
</dbReference>
<dbReference type="GO" id="GO:0005975">
    <property type="term" value="P:carbohydrate metabolic process"/>
    <property type="evidence" value="ECO:0007669"/>
    <property type="project" value="InterPro"/>
</dbReference>
<dbReference type="GO" id="GO:0046167">
    <property type="term" value="P:glycerol-3-phosphate biosynthetic process"/>
    <property type="evidence" value="ECO:0007669"/>
    <property type="project" value="UniProtKB-UniRule"/>
</dbReference>
<dbReference type="GO" id="GO:0046168">
    <property type="term" value="P:glycerol-3-phosphate catabolic process"/>
    <property type="evidence" value="ECO:0007669"/>
    <property type="project" value="InterPro"/>
</dbReference>
<dbReference type="GO" id="GO:0006650">
    <property type="term" value="P:glycerophospholipid metabolic process"/>
    <property type="evidence" value="ECO:0007669"/>
    <property type="project" value="UniProtKB-UniRule"/>
</dbReference>
<dbReference type="GO" id="GO:0008654">
    <property type="term" value="P:phospholipid biosynthetic process"/>
    <property type="evidence" value="ECO:0007669"/>
    <property type="project" value="UniProtKB-KW"/>
</dbReference>
<dbReference type="FunFam" id="1.10.1040.10:FF:000001">
    <property type="entry name" value="Glycerol-3-phosphate dehydrogenase [NAD(P)+]"/>
    <property type="match status" value="1"/>
</dbReference>
<dbReference type="FunFam" id="3.40.50.720:FF:000019">
    <property type="entry name" value="Glycerol-3-phosphate dehydrogenase [NAD(P)+]"/>
    <property type="match status" value="1"/>
</dbReference>
<dbReference type="Gene3D" id="1.10.1040.10">
    <property type="entry name" value="N-(1-d-carboxylethyl)-l-norvaline Dehydrogenase, domain 2"/>
    <property type="match status" value="1"/>
</dbReference>
<dbReference type="Gene3D" id="3.40.50.720">
    <property type="entry name" value="NAD(P)-binding Rossmann-like Domain"/>
    <property type="match status" value="1"/>
</dbReference>
<dbReference type="HAMAP" id="MF_00394">
    <property type="entry name" value="NAD_Glyc3P_dehydrog"/>
    <property type="match status" value="1"/>
</dbReference>
<dbReference type="InterPro" id="IPR008927">
    <property type="entry name" value="6-PGluconate_DH-like_C_sf"/>
</dbReference>
<dbReference type="InterPro" id="IPR013328">
    <property type="entry name" value="6PGD_dom2"/>
</dbReference>
<dbReference type="InterPro" id="IPR006168">
    <property type="entry name" value="G3P_DH_NAD-dep"/>
</dbReference>
<dbReference type="InterPro" id="IPR006109">
    <property type="entry name" value="G3P_DH_NAD-dep_C"/>
</dbReference>
<dbReference type="InterPro" id="IPR011128">
    <property type="entry name" value="G3P_DH_NAD-dep_N"/>
</dbReference>
<dbReference type="InterPro" id="IPR036291">
    <property type="entry name" value="NAD(P)-bd_dom_sf"/>
</dbReference>
<dbReference type="NCBIfam" id="NF000940">
    <property type="entry name" value="PRK00094.1-2"/>
    <property type="match status" value="1"/>
</dbReference>
<dbReference type="NCBIfam" id="NF000941">
    <property type="entry name" value="PRK00094.1-3"/>
    <property type="match status" value="1"/>
</dbReference>
<dbReference type="NCBIfam" id="NF000942">
    <property type="entry name" value="PRK00094.1-4"/>
    <property type="match status" value="1"/>
</dbReference>
<dbReference type="PANTHER" id="PTHR11728">
    <property type="entry name" value="GLYCEROL-3-PHOSPHATE DEHYDROGENASE"/>
    <property type="match status" value="1"/>
</dbReference>
<dbReference type="PANTHER" id="PTHR11728:SF1">
    <property type="entry name" value="GLYCEROL-3-PHOSPHATE DEHYDROGENASE [NAD(+)] 2, CHLOROPLASTIC"/>
    <property type="match status" value="1"/>
</dbReference>
<dbReference type="Pfam" id="PF07479">
    <property type="entry name" value="NAD_Gly3P_dh_C"/>
    <property type="match status" value="1"/>
</dbReference>
<dbReference type="Pfam" id="PF01210">
    <property type="entry name" value="NAD_Gly3P_dh_N"/>
    <property type="match status" value="1"/>
</dbReference>
<dbReference type="PIRSF" id="PIRSF000114">
    <property type="entry name" value="Glycerol-3-P_dh"/>
    <property type="match status" value="1"/>
</dbReference>
<dbReference type="PRINTS" id="PR00077">
    <property type="entry name" value="GPDHDRGNASE"/>
</dbReference>
<dbReference type="SUPFAM" id="SSF48179">
    <property type="entry name" value="6-phosphogluconate dehydrogenase C-terminal domain-like"/>
    <property type="match status" value="1"/>
</dbReference>
<dbReference type="SUPFAM" id="SSF51735">
    <property type="entry name" value="NAD(P)-binding Rossmann-fold domains"/>
    <property type="match status" value="1"/>
</dbReference>
<dbReference type="PROSITE" id="PS00957">
    <property type="entry name" value="NAD_G3PDH"/>
    <property type="match status" value="1"/>
</dbReference>
<proteinExistence type="inferred from homology"/>
<protein>
    <recommendedName>
        <fullName evidence="1">Glycerol-3-phosphate dehydrogenase [NAD(P)+]</fullName>
        <ecNumber evidence="1">1.1.1.94</ecNumber>
    </recommendedName>
    <alternativeName>
        <fullName evidence="1">NAD(P)(+)-dependent glycerol-3-phosphate dehydrogenase</fullName>
    </alternativeName>
    <alternativeName>
        <fullName evidence="1">NAD(P)H-dependent dihydroxyacetone-phosphate reductase</fullName>
    </alternativeName>
</protein>
<evidence type="ECO:0000255" key="1">
    <source>
        <dbReference type="HAMAP-Rule" id="MF_00394"/>
    </source>
</evidence>
<sequence length="330" mass="36046">MSKVSFIGGGSFGTALAILLAEKGNTVSIYNRDKKVVDDININRRNDKYIKNLQVPSNIKAFDNLEKATEDAEYIVLAIPSHTIRSICKQLKNKIKQETIIISIAKGIEEHTDKRLSLVIKEELNNPIVVLSGPSHAEEVVLKLPTTLVVSSENMNAASEAQNLFMTSFFRVYTNEDLVGVEVGGAVKNIIALAAGILDGLGYGDNTKAALMTRGMKEISRIGSALGGKEETFYGLTGMGDLIVTCTSNHSRNRKAGLLIGSGMDVNKAIEKIGMVVEGVKACKAFYELKEKIGVSMPITDILYKVLFEKKDPKSGIEELMLREKKSEIF</sequence>
<comment type="function">
    <text evidence="1">Catalyzes the reduction of the glycolytic intermediate dihydroxyacetone phosphate (DHAP) to sn-glycerol 3-phosphate (G3P), the key precursor for phospholipid synthesis.</text>
</comment>
<comment type="catalytic activity">
    <reaction evidence="1">
        <text>sn-glycerol 3-phosphate + NAD(+) = dihydroxyacetone phosphate + NADH + H(+)</text>
        <dbReference type="Rhea" id="RHEA:11092"/>
        <dbReference type="ChEBI" id="CHEBI:15378"/>
        <dbReference type="ChEBI" id="CHEBI:57540"/>
        <dbReference type="ChEBI" id="CHEBI:57597"/>
        <dbReference type="ChEBI" id="CHEBI:57642"/>
        <dbReference type="ChEBI" id="CHEBI:57945"/>
        <dbReference type="EC" id="1.1.1.94"/>
    </reaction>
    <physiologicalReaction direction="right-to-left" evidence="1">
        <dbReference type="Rhea" id="RHEA:11094"/>
    </physiologicalReaction>
</comment>
<comment type="catalytic activity">
    <reaction evidence="1">
        <text>sn-glycerol 3-phosphate + NADP(+) = dihydroxyacetone phosphate + NADPH + H(+)</text>
        <dbReference type="Rhea" id="RHEA:11096"/>
        <dbReference type="ChEBI" id="CHEBI:15378"/>
        <dbReference type="ChEBI" id="CHEBI:57597"/>
        <dbReference type="ChEBI" id="CHEBI:57642"/>
        <dbReference type="ChEBI" id="CHEBI:57783"/>
        <dbReference type="ChEBI" id="CHEBI:58349"/>
        <dbReference type="EC" id="1.1.1.94"/>
    </reaction>
    <physiologicalReaction direction="right-to-left" evidence="1">
        <dbReference type="Rhea" id="RHEA:11098"/>
    </physiologicalReaction>
</comment>
<comment type="pathway">
    <text evidence="1">Membrane lipid metabolism; glycerophospholipid metabolism.</text>
</comment>
<comment type="subcellular location">
    <subcellularLocation>
        <location evidence="1">Cytoplasm</location>
    </subcellularLocation>
</comment>
<comment type="similarity">
    <text evidence="1">Belongs to the NAD-dependent glycerol-3-phosphate dehydrogenase family.</text>
</comment>
<gene>
    <name evidence="1" type="primary">gpsA</name>
    <name type="ordered locus">CLH_1155</name>
</gene>